<accession>Q8FJY4</accession>
<feature type="chain" id="PRO_0000178064" description="Apolipoprotein N-acyltransferase">
    <location>
        <begin position="1"/>
        <end position="512"/>
    </location>
</feature>
<feature type="topological domain" description="Cytoplasmic" evidence="4">
    <location>
        <begin position="1"/>
        <end position="11"/>
    </location>
</feature>
<feature type="transmembrane region" description="Helical" evidence="1">
    <location>
        <begin position="12"/>
        <end position="28"/>
    </location>
</feature>
<feature type="topological domain" description="Periplasmic" evidence="4">
    <location>
        <begin position="29"/>
        <end position="33"/>
    </location>
</feature>
<feature type="transmembrane region" description="Helical" evidence="1">
    <location>
        <begin position="34"/>
        <end position="50"/>
    </location>
</feature>
<feature type="topological domain" description="Cytoplasmic" evidence="4">
    <location>
        <begin position="51"/>
        <end position="56"/>
    </location>
</feature>
<feature type="transmembrane region" description="Helical" evidence="1">
    <location>
        <begin position="57"/>
        <end position="77"/>
    </location>
</feature>
<feature type="topological domain" description="Periplasmic" evidence="4">
    <location>
        <begin position="78"/>
        <end position="90"/>
    </location>
</feature>
<feature type="transmembrane region" description="Helical" evidence="1">
    <location>
        <begin position="91"/>
        <end position="111"/>
    </location>
</feature>
<feature type="topological domain" description="Cytoplasmic" evidence="4">
    <location>
        <begin position="112"/>
        <end position="123"/>
    </location>
</feature>
<feature type="transmembrane region" description="Helical" evidence="1">
    <location>
        <begin position="124"/>
        <end position="144"/>
    </location>
</feature>
<feature type="topological domain" description="Periplasmic" evidence="4">
    <location>
        <begin position="145"/>
        <end position="167"/>
    </location>
</feature>
<feature type="transmembrane region" description="Helical" evidence="1">
    <location>
        <begin position="168"/>
        <end position="188"/>
    </location>
</feature>
<feature type="topological domain" description="Cytoplasmic" evidence="4">
    <location>
        <begin position="189"/>
        <end position="193"/>
    </location>
</feature>
<feature type="transmembrane region" description="Helical" evidence="1">
    <location>
        <begin position="194"/>
        <end position="214"/>
    </location>
</feature>
<feature type="topological domain" description="Periplasmic" evidence="4">
    <location>
        <begin position="215"/>
        <end position="486"/>
    </location>
</feature>
<feature type="transmembrane region" description="Helical" evidence="1">
    <location>
        <begin position="487"/>
        <end position="507"/>
    </location>
</feature>
<feature type="topological domain" description="Cytoplasmic" evidence="4">
    <location>
        <begin position="508"/>
        <end position="512"/>
    </location>
</feature>
<feature type="domain" description="CN hydrolase" evidence="2">
    <location>
        <begin position="227"/>
        <end position="476"/>
    </location>
</feature>
<feature type="active site" description="Proton acceptor" evidence="2 4">
    <location>
        <position position="267"/>
    </location>
</feature>
<feature type="active site" evidence="2 4">
    <location>
        <position position="335"/>
    </location>
</feature>
<feature type="active site" description="Nucleophile" evidence="2 4">
    <location>
        <position position="387"/>
    </location>
</feature>
<feature type="mutagenesis site" description="Cannot rescue growth of a lnt mutant." evidence="3">
    <original>F</original>
    <variation>A</variation>
    <location>
        <position position="146"/>
    </location>
</feature>
<feature type="mutagenesis site" description="Cannot rescue growth of a lnt mutant." evidence="3">
    <original>W</original>
    <variation>A</variation>
    <location>
        <position position="148"/>
    </location>
</feature>
<feature type="mutagenesis site" description="Cannot rescue growth of a lnt mutant." evidence="3">
    <original>Q</original>
    <variation>A</variation>
    <location>
        <position position="233"/>
    </location>
</feature>
<feature type="mutagenesis site" description="Cannot rescue growth of a lnt mutant." evidence="3">
    <original>W</original>
    <variation>A</variation>
    <location>
        <position position="237"/>
    </location>
</feature>
<feature type="mutagenesis site" description="Cannot rescue growth of a lnt mutant." evidence="3">
    <original>E</original>
    <variation>A</variation>
    <location>
        <position position="267"/>
    </location>
</feature>
<feature type="mutagenesis site" description="Cannot rescue growth of a lnt mutant." evidence="3">
    <original>N</original>
    <variation>A</variation>
    <location>
        <position position="314"/>
    </location>
</feature>
<feature type="mutagenesis site" description="Cannot rescue growth of a lnt mutant." evidence="3">
    <original>K</original>
    <variation>A</variation>
    <location>
        <position position="335"/>
    </location>
</feature>
<feature type="mutagenesis site" description="Cannot rescue growth of a lnt mutant." evidence="3">
    <original>E</original>
    <variation>A</variation>
    <location>
        <position position="343"/>
    </location>
</feature>
<feature type="mutagenesis site" description="Cannot rescue growth of a lnt mutant." evidence="3">
    <original>F</original>
    <variation>A</variation>
    <location>
        <position position="365"/>
    </location>
</feature>
<feature type="mutagenesis site" description="Cannot rescue growth of a lnt mutant." evidence="3">
    <original>C</original>
    <variation>A</variation>
    <location>
        <position position="387"/>
    </location>
</feature>
<feature type="mutagenesis site" description="Cannot rescue growth of a lnt mutant." evidence="3">
    <original>Y</original>
    <variation>A</variation>
    <location>
        <position position="388"/>
    </location>
</feature>
<feature type="mutagenesis site" description="Cannot rescue growth of a lnt mutant." evidence="3">
    <original>E</original>
    <variation>A</variation>
    <location>
        <position position="389"/>
    </location>
</feature>
<feature type="mutagenesis site" description="Cannot rescue growth of a lnt mutant." evidence="3">
    <original>W</original>
    <variation>A</variation>
    <location>
        <position position="415"/>
    </location>
</feature>
<feature type="mutagenesis site" description="Cannot rescue growth of a lnt mutant." evidence="3">
    <original>F</original>
    <variation>A</variation>
    <location>
        <position position="416"/>
    </location>
</feature>
<proteinExistence type="evidence at protein level"/>
<name>LNT_ECOL6</name>
<keyword id="KW-0002">3D-structure</keyword>
<keyword id="KW-0012">Acyltransferase</keyword>
<keyword id="KW-0997">Cell inner membrane</keyword>
<keyword id="KW-1003">Cell membrane</keyword>
<keyword id="KW-0472">Membrane</keyword>
<keyword id="KW-1185">Reference proteome</keyword>
<keyword id="KW-0808">Transferase</keyword>
<keyword id="KW-0812">Transmembrane</keyword>
<keyword id="KW-1133">Transmembrane helix</keyword>
<dbReference type="EC" id="2.3.1.269" evidence="2 3"/>
<dbReference type="EMBL" id="AE014075">
    <property type="protein sequence ID" value="AAN79215.1"/>
    <property type="molecule type" value="Genomic_DNA"/>
</dbReference>
<dbReference type="RefSeq" id="WP_000853028.1">
    <property type="nucleotide sequence ID" value="NZ_CP051263.1"/>
</dbReference>
<dbReference type="PDB" id="5VRG">
    <property type="method" value="X-ray"/>
    <property type="resolution" value="2.52 A"/>
    <property type="chains" value="A=2-512"/>
</dbReference>
<dbReference type="PDB" id="5VRH">
    <property type="method" value="X-ray"/>
    <property type="resolution" value="2.14 A"/>
    <property type="chains" value="A=2-512"/>
</dbReference>
<dbReference type="PDBsum" id="5VRG"/>
<dbReference type="PDBsum" id="5VRH"/>
<dbReference type="SMR" id="Q8FJY4"/>
<dbReference type="STRING" id="199310.c0742"/>
<dbReference type="KEGG" id="ecc:c0742"/>
<dbReference type="eggNOG" id="COG0815">
    <property type="taxonomic scope" value="Bacteria"/>
</dbReference>
<dbReference type="HOGENOM" id="CLU_019563_3_0_6"/>
<dbReference type="BioCyc" id="ECOL199310:C0742-MONOMER"/>
<dbReference type="UniPathway" id="UPA00666"/>
<dbReference type="Proteomes" id="UP000001410">
    <property type="component" value="Chromosome"/>
</dbReference>
<dbReference type="GO" id="GO:0005886">
    <property type="term" value="C:plasma membrane"/>
    <property type="evidence" value="ECO:0007669"/>
    <property type="project" value="UniProtKB-SubCell"/>
</dbReference>
<dbReference type="GO" id="GO:0016410">
    <property type="term" value="F:N-acyltransferase activity"/>
    <property type="evidence" value="ECO:0007669"/>
    <property type="project" value="UniProtKB-UniRule"/>
</dbReference>
<dbReference type="GO" id="GO:0042158">
    <property type="term" value="P:lipoprotein biosynthetic process"/>
    <property type="evidence" value="ECO:0007669"/>
    <property type="project" value="UniProtKB-UniRule"/>
</dbReference>
<dbReference type="CDD" id="cd07571">
    <property type="entry name" value="ALP_N-acyl_transferase"/>
    <property type="match status" value="1"/>
</dbReference>
<dbReference type="FunFam" id="3.60.110.10:FF:000015">
    <property type="entry name" value="Apolipoprotein N-acyltransferase"/>
    <property type="match status" value="1"/>
</dbReference>
<dbReference type="Gene3D" id="3.60.110.10">
    <property type="entry name" value="Carbon-nitrogen hydrolase"/>
    <property type="match status" value="1"/>
</dbReference>
<dbReference type="HAMAP" id="MF_01148">
    <property type="entry name" value="Lnt"/>
    <property type="match status" value="1"/>
</dbReference>
<dbReference type="InterPro" id="IPR004563">
    <property type="entry name" value="Apolipo_AcylTrfase"/>
</dbReference>
<dbReference type="InterPro" id="IPR003010">
    <property type="entry name" value="C-N_Hydrolase"/>
</dbReference>
<dbReference type="InterPro" id="IPR036526">
    <property type="entry name" value="C-N_Hydrolase_sf"/>
</dbReference>
<dbReference type="InterPro" id="IPR045378">
    <property type="entry name" value="LNT_N"/>
</dbReference>
<dbReference type="NCBIfam" id="TIGR00546">
    <property type="entry name" value="lnt"/>
    <property type="match status" value="1"/>
</dbReference>
<dbReference type="PANTHER" id="PTHR38686">
    <property type="entry name" value="APOLIPOPROTEIN N-ACYLTRANSFERASE"/>
    <property type="match status" value="1"/>
</dbReference>
<dbReference type="PANTHER" id="PTHR38686:SF1">
    <property type="entry name" value="APOLIPOPROTEIN N-ACYLTRANSFERASE"/>
    <property type="match status" value="1"/>
</dbReference>
<dbReference type="Pfam" id="PF00795">
    <property type="entry name" value="CN_hydrolase"/>
    <property type="match status" value="1"/>
</dbReference>
<dbReference type="Pfam" id="PF20154">
    <property type="entry name" value="LNT_N"/>
    <property type="match status" value="1"/>
</dbReference>
<dbReference type="SUPFAM" id="SSF56317">
    <property type="entry name" value="Carbon-nitrogen hydrolase"/>
    <property type="match status" value="1"/>
</dbReference>
<dbReference type="PROSITE" id="PS50263">
    <property type="entry name" value="CN_HYDROLASE"/>
    <property type="match status" value="1"/>
</dbReference>
<gene>
    <name evidence="2" type="primary">lnt</name>
    <name type="synonym">cutE</name>
    <name type="ordered locus">c0742</name>
</gene>
<organism>
    <name type="scientific">Escherichia coli O6:H1 (strain CFT073 / ATCC 700928 / UPEC)</name>
    <dbReference type="NCBI Taxonomy" id="199310"/>
    <lineage>
        <taxon>Bacteria</taxon>
        <taxon>Pseudomonadati</taxon>
        <taxon>Pseudomonadota</taxon>
        <taxon>Gammaproteobacteria</taxon>
        <taxon>Enterobacterales</taxon>
        <taxon>Enterobacteriaceae</taxon>
        <taxon>Escherichia</taxon>
    </lineage>
</organism>
<comment type="function">
    <text evidence="3">Catalyzes the phospholipid dependent N-acylation of the N-terminal cysteine of apolipoprotein, the last step in lipoprotein maturation. Utilizes a two-step reaction via a ping-pong mechanism. Lnt undergoes covalent modification in the presence of phospholipids, resulting in a thioester acyl-enzyme intermediate. It then transfers the acyl chain to the amine group of the N-terminal diacylglyceryl-modified cysteine of apolipoprotein, leading to the formation of mature triacylated lipoprotein.</text>
</comment>
<comment type="catalytic activity">
    <reaction evidence="2 3">
        <text>N-terminal S-1,2-diacyl-sn-glyceryl-L-cysteinyl-[lipoprotein] + a glycerophospholipid = N-acyl-S-1,2-diacyl-sn-glyceryl-L-cysteinyl-[lipoprotein] + a 2-acyl-sn-glycero-3-phospholipid + H(+)</text>
        <dbReference type="Rhea" id="RHEA:48228"/>
        <dbReference type="Rhea" id="RHEA-COMP:14681"/>
        <dbReference type="Rhea" id="RHEA-COMP:14684"/>
        <dbReference type="ChEBI" id="CHEBI:15378"/>
        <dbReference type="ChEBI" id="CHEBI:136912"/>
        <dbReference type="ChEBI" id="CHEBI:140656"/>
        <dbReference type="ChEBI" id="CHEBI:140657"/>
        <dbReference type="ChEBI" id="CHEBI:140660"/>
        <dbReference type="EC" id="2.3.1.269"/>
    </reaction>
</comment>
<comment type="pathway">
    <text evidence="2">Protein modification; lipoprotein biosynthesis (N-acyl transfer).</text>
</comment>
<comment type="subunit">
    <text evidence="3">Monomer.</text>
</comment>
<comment type="subcellular location">
    <subcellularLocation>
        <location evidence="2 3">Cell inner membrane</location>
        <topology evidence="2 3">Multi-pass membrane protein</topology>
    </subcellularLocation>
</comment>
<comment type="disruption phenotype">
    <text evidence="3">Essential. Depletion results in increased outer membrane permeability.</text>
</comment>
<comment type="similarity">
    <text evidence="2">Belongs to the CN hydrolase family. Apolipoprotein N-acyltransferase subfamily.</text>
</comment>
<protein>
    <recommendedName>
        <fullName evidence="2">Apolipoprotein N-acyltransferase</fullName>
        <shortName evidence="2">ALP N-acyltransferase</shortName>
        <ecNumber evidence="2 3">2.3.1.269</ecNumber>
    </recommendedName>
    <alternativeName>
        <fullName>Copper homeostasis protein CutE</fullName>
    </alternativeName>
</protein>
<evidence type="ECO:0000255" key="1"/>
<evidence type="ECO:0000255" key="2">
    <source>
        <dbReference type="HAMAP-Rule" id="MF_01148"/>
    </source>
</evidence>
<evidence type="ECO:0000269" key="3">
    <source>
    </source>
</evidence>
<evidence type="ECO:0000305" key="4">
    <source>
    </source>
</evidence>
<evidence type="ECO:0007744" key="5">
    <source>
        <dbReference type="PDB" id="5VRG"/>
    </source>
</evidence>
<evidence type="ECO:0007744" key="6">
    <source>
        <dbReference type="PDB" id="5VRH"/>
    </source>
</evidence>
<reference key="1">
    <citation type="journal article" date="2002" name="Proc. Natl. Acad. Sci. U.S.A.">
        <title>Extensive mosaic structure revealed by the complete genome sequence of uropathogenic Escherichia coli.</title>
        <authorList>
            <person name="Welch R.A."/>
            <person name="Burland V."/>
            <person name="Plunkett G. III"/>
            <person name="Redford P."/>
            <person name="Roesch P."/>
            <person name="Rasko D."/>
            <person name="Buckles E.L."/>
            <person name="Liou S.-R."/>
            <person name="Boutin A."/>
            <person name="Hackett J."/>
            <person name="Stroud D."/>
            <person name="Mayhew G.F."/>
            <person name="Rose D.J."/>
            <person name="Zhou S."/>
            <person name="Schwartz D.C."/>
            <person name="Perna N.T."/>
            <person name="Mobley H.L.T."/>
            <person name="Donnenberg M.S."/>
            <person name="Blattner F.R."/>
        </authorList>
    </citation>
    <scope>NUCLEOTIDE SEQUENCE [LARGE SCALE GENOMIC DNA]</scope>
    <source>
        <strain>CFT073 / ATCC 700928 / UPEC</strain>
    </source>
</reference>
<reference evidence="5 6" key="2">
    <citation type="journal article" date="2017" name="Proc. Natl. Acad. Sci. U.S.A.">
        <title>Structural insights into lipoprotein N-acylation by Escherichia coli apolipoprotein N-acyltransferase.</title>
        <authorList>
            <person name="Noland C.L."/>
            <person name="Kattke M.D."/>
            <person name="Diao J."/>
            <person name="Gloor S.L."/>
            <person name="Pantua H."/>
            <person name="Reichelt M."/>
            <person name="Katakam A.K."/>
            <person name="Yan D."/>
            <person name="Kang J."/>
            <person name="Zilberleyb I."/>
            <person name="Xu M."/>
            <person name="Kapadia S.B."/>
            <person name="Murray J.M."/>
        </authorList>
    </citation>
    <scope>X-RAY CRYSTALLOGRAPHY (2.14 ANGSTROMS) OF 2-512 OF WILD-TYPE AND MUTANT SER-387</scope>
    <scope>FUNCTION</scope>
    <scope>CATALYTIC ACTIVITY</scope>
    <scope>REACTION MECHANISM</scope>
    <scope>SUBUNIT</scope>
    <scope>SUBCELLULAR LOCATION</scope>
    <scope>TOPOLOGY</scope>
    <scope>DISRUPTION PHENOTYPE</scope>
    <scope>ACTIVE SITE</scope>
    <scope>MUTAGENESIS OF PHE-146; TRP-148; GLN-233; TRP-237; GLU-267; ASN-314; LYS-335; GLU-343; PHE-365; CYS-387; TYR-388; GLU-389; TRP-415 AND PHE-416</scope>
    <source>
        <strain>CFT073 / ATCC 700928 / UPEC</strain>
    </source>
</reference>
<sequence>MAFASLIERQRIRLLLALLFGACGTLAFSPYDVWPAAIISLMGLQALTFNRRPLQSAAIGFCWGFGLFGSGINWVYVSIATFGGMPGPVNIFLVVLLAAYLSLYTGLFAGVLSRLWPKTTWLRVAIAAPALWQVTEFLRGWVLTGFPWLQFGYSQIDGPLKGLAPIMGVEAINFLLMMVSGLLALALVKRNWRPLVVAVVLFALPFPLRYIQWFTPQPEKTIQVSMVQGDIPQSLKWDGDQLLNTLKIYYNATAPLMGKSSLIIWPESAITDLEINQQPFLKALDGELRDKGSSLVTGIVDARLNKQNRYDTYNTIITLGKGAPYSYESADRYNKNHLVPFGEFVPLESILRPLAPFFDLPMSSFSRGPYIQPPLSLNGIQLTAAICYEIILGEQVRDNFRPDTDYLLTISNDAWFGKSIGPWQHFQMARMRALELARPLLRSTNNGITAVIGPQGEIQAMIPQFTREVLTTNVTPTTGLTPYARTGNWPLWVLTALFGFAAVLMSLRARKH</sequence>